<feature type="chain" id="PRO_0000251035" description="Probable chemoreceptor glutamine deamidase CheD 1">
    <location>
        <begin position="1"/>
        <end position="201"/>
    </location>
</feature>
<sequence>MRHQRLEGRHIIRIAPGEYHVTTGGGVISTLLGSCVAACLFDSESGVAGMNHFLLSNHRYSRTMPFCFTEAGRYGIHSMELLINSLMRHGARRENLRAKAFGGASILVNRAEVGNFSCVGSVNARFVREFLANEGIPLLSADLEGERGRVIYFDTTDFSVFVRKIRLQRSLVVAKRDRNVWEHGVQAHDVEPDSVDLWLPG</sequence>
<organism>
    <name type="scientific">Geobacter sulfurreducens (strain ATCC 51573 / DSM 12127 / PCA)</name>
    <dbReference type="NCBI Taxonomy" id="243231"/>
    <lineage>
        <taxon>Bacteria</taxon>
        <taxon>Pseudomonadati</taxon>
        <taxon>Thermodesulfobacteriota</taxon>
        <taxon>Desulfuromonadia</taxon>
        <taxon>Geobacterales</taxon>
        <taxon>Geobacteraceae</taxon>
        <taxon>Geobacter</taxon>
    </lineage>
</organism>
<proteinExistence type="inferred from homology"/>
<accession>Q74F83</accession>
<gene>
    <name evidence="1" type="primary">cheD1</name>
    <name type="synonym">cheD64H</name>
    <name type="ordered locus">GSU0726</name>
</gene>
<comment type="function">
    <text evidence="1">Probably deamidates glutamine residues to glutamate on methyl-accepting chemotaxis receptors (MCPs), playing an important role in chemotaxis.</text>
</comment>
<comment type="catalytic activity">
    <reaction evidence="1">
        <text>L-glutaminyl-[protein] + H2O = L-glutamyl-[protein] + NH4(+)</text>
        <dbReference type="Rhea" id="RHEA:16441"/>
        <dbReference type="Rhea" id="RHEA-COMP:10207"/>
        <dbReference type="Rhea" id="RHEA-COMP:10208"/>
        <dbReference type="ChEBI" id="CHEBI:15377"/>
        <dbReference type="ChEBI" id="CHEBI:28938"/>
        <dbReference type="ChEBI" id="CHEBI:29973"/>
        <dbReference type="ChEBI" id="CHEBI:30011"/>
        <dbReference type="EC" id="3.5.1.44"/>
    </reaction>
</comment>
<comment type="similarity">
    <text evidence="1">Belongs to the CheD family.</text>
</comment>
<reference key="1">
    <citation type="journal article" date="2003" name="Science">
        <title>Genome of Geobacter sulfurreducens: metal reduction in subsurface environments.</title>
        <authorList>
            <person name="Methe B.A."/>
            <person name="Nelson K.E."/>
            <person name="Eisen J.A."/>
            <person name="Paulsen I.T."/>
            <person name="Nelson W.C."/>
            <person name="Heidelberg J.F."/>
            <person name="Wu D."/>
            <person name="Wu M."/>
            <person name="Ward N.L."/>
            <person name="Beanan M.J."/>
            <person name="Dodson R.J."/>
            <person name="Madupu R."/>
            <person name="Brinkac L.M."/>
            <person name="Daugherty S.C."/>
            <person name="DeBoy R.T."/>
            <person name="Durkin A.S."/>
            <person name="Gwinn M.L."/>
            <person name="Kolonay J.F."/>
            <person name="Sullivan S.A."/>
            <person name="Haft D.H."/>
            <person name="Selengut J."/>
            <person name="Davidsen T.M."/>
            <person name="Zafar N."/>
            <person name="White O."/>
            <person name="Tran B."/>
            <person name="Romero C."/>
            <person name="Forberger H.A."/>
            <person name="Weidman J.F."/>
            <person name="Khouri H.M."/>
            <person name="Feldblyum T.V."/>
            <person name="Utterback T.R."/>
            <person name="Van Aken S.E."/>
            <person name="Lovley D.R."/>
            <person name="Fraser C.M."/>
        </authorList>
    </citation>
    <scope>NUCLEOTIDE SEQUENCE [LARGE SCALE GENOMIC DNA]</scope>
    <source>
        <strain>ATCC 51573 / DSM 12127 / PCA</strain>
    </source>
</reference>
<keyword id="KW-0145">Chemotaxis</keyword>
<keyword id="KW-0378">Hydrolase</keyword>
<keyword id="KW-1185">Reference proteome</keyword>
<evidence type="ECO:0000255" key="1">
    <source>
        <dbReference type="HAMAP-Rule" id="MF_01440"/>
    </source>
</evidence>
<protein>
    <recommendedName>
        <fullName evidence="1">Probable chemoreceptor glutamine deamidase CheD 1</fullName>
        <ecNumber evidence="1">3.5.1.44</ecNumber>
    </recommendedName>
</protein>
<dbReference type="EC" id="3.5.1.44" evidence="1"/>
<dbReference type="EMBL" id="AE017180">
    <property type="protein sequence ID" value="AAR34056.2"/>
    <property type="molecule type" value="Genomic_DNA"/>
</dbReference>
<dbReference type="RefSeq" id="NP_951783.2">
    <property type="nucleotide sequence ID" value="NC_002939.5"/>
</dbReference>
<dbReference type="RefSeq" id="WP_010941388.1">
    <property type="nucleotide sequence ID" value="NC_002939.5"/>
</dbReference>
<dbReference type="SMR" id="Q74F83"/>
<dbReference type="STRING" id="243231.GSU0726"/>
<dbReference type="EnsemblBacteria" id="AAR34056">
    <property type="protein sequence ID" value="AAR34056"/>
    <property type="gene ID" value="GSU0726"/>
</dbReference>
<dbReference type="KEGG" id="gsu:GSU0726"/>
<dbReference type="PATRIC" id="fig|243231.5.peg.724"/>
<dbReference type="eggNOG" id="COG1871">
    <property type="taxonomic scope" value="Bacteria"/>
</dbReference>
<dbReference type="HOGENOM" id="CLU_087854_0_0_7"/>
<dbReference type="InParanoid" id="Q74F83"/>
<dbReference type="OrthoDB" id="9807202at2"/>
<dbReference type="Proteomes" id="UP000000577">
    <property type="component" value="Chromosome"/>
</dbReference>
<dbReference type="GO" id="GO:0050568">
    <property type="term" value="F:protein-glutamine glutaminase activity"/>
    <property type="evidence" value="ECO:0007669"/>
    <property type="project" value="UniProtKB-UniRule"/>
</dbReference>
<dbReference type="GO" id="GO:0006935">
    <property type="term" value="P:chemotaxis"/>
    <property type="evidence" value="ECO:0007669"/>
    <property type="project" value="UniProtKB-UniRule"/>
</dbReference>
<dbReference type="CDD" id="cd16352">
    <property type="entry name" value="CheD"/>
    <property type="match status" value="1"/>
</dbReference>
<dbReference type="Gene3D" id="3.30.1330.200">
    <property type="match status" value="1"/>
</dbReference>
<dbReference type="HAMAP" id="MF_01440">
    <property type="entry name" value="CheD"/>
    <property type="match status" value="1"/>
</dbReference>
<dbReference type="InterPro" id="IPR038592">
    <property type="entry name" value="CheD-like_sf"/>
</dbReference>
<dbReference type="InterPro" id="IPR005659">
    <property type="entry name" value="Chemorcpt_Glu_NH3ase_CheD"/>
</dbReference>
<dbReference type="InterPro" id="IPR011324">
    <property type="entry name" value="Cytotoxic_necrot_fac-like_cat"/>
</dbReference>
<dbReference type="PANTHER" id="PTHR35147:SF3">
    <property type="entry name" value="CHEMORECEPTOR GLUTAMINE DEAMIDASE CHED 1-RELATED"/>
    <property type="match status" value="1"/>
</dbReference>
<dbReference type="PANTHER" id="PTHR35147">
    <property type="entry name" value="CHEMORECEPTOR GLUTAMINE DEAMIDASE CHED-RELATED"/>
    <property type="match status" value="1"/>
</dbReference>
<dbReference type="Pfam" id="PF03975">
    <property type="entry name" value="CheD"/>
    <property type="match status" value="1"/>
</dbReference>
<dbReference type="SUPFAM" id="SSF64438">
    <property type="entry name" value="CNF1/YfiH-like putative cysteine hydrolases"/>
    <property type="match status" value="1"/>
</dbReference>
<name>CHED1_GEOSL</name>